<feature type="chain" id="PRO_1000142125" description="Large ribosomal subunit protein uL4">
    <location>
        <begin position="1"/>
        <end position="201"/>
    </location>
</feature>
<feature type="region of interest" description="Disordered" evidence="2">
    <location>
        <begin position="51"/>
        <end position="73"/>
    </location>
</feature>
<evidence type="ECO:0000255" key="1">
    <source>
        <dbReference type="HAMAP-Rule" id="MF_01328"/>
    </source>
</evidence>
<evidence type="ECO:0000256" key="2">
    <source>
        <dbReference type="SAM" id="MobiDB-lite"/>
    </source>
</evidence>
<evidence type="ECO:0000305" key="3"/>
<comment type="function">
    <text evidence="1">One of the primary rRNA binding proteins, this protein initially binds near the 5'-end of the 23S rRNA. It is important during the early stages of 50S assembly. It makes multiple contacts with different domains of the 23S rRNA in the assembled 50S subunit and ribosome.</text>
</comment>
<comment type="function">
    <text evidence="1">Forms part of the polypeptide exit tunnel.</text>
</comment>
<comment type="subunit">
    <text evidence="1">Part of the 50S ribosomal subunit.</text>
</comment>
<comment type="similarity">
    <text evidence="1">Belongs to the universal ribosomal protein uL4 family.</text>
</comment>
<sequence length="201" mass="22043">MELVLKDAQSALTVSETTFGRDFNEALVHQVVVAYAAGARQGTRAQKTRAEVTGSGKKPWRQKGTGRARAGSVKSPIWRSGGVTFAAKSQDHSQKVNKKMYRGALKSILSELVRQDRLIVVEQFSLEAPKTKLLAEKLKDMALEDVLIITGELEENLFLAARNLYKVDVRDAAGIDPVSLIAFDKVVMTADAVKQVEEMLA</sequence>
<reference key="1">
    <citation type="journal article" date="2008" name="Environ. Microbiol.">
        <title>The genome of Erwinia tasmaniensis strain Et1/99, a non-pathogenic bacterium in the genus Erwinia.</title>
        <authorList>
            <person name="Kube M."/>
            <person name="Migdoll A.M."/>
            <person name="Mueller I."/>
            <person name="Kuhl H."/>
            <person name="Beck A."/>
            <person name="Reinhardt R."/>
            <person name="Geider K."/>
        </authorList>
    </citation>
    <scope>NUCLEOTIDE SEQUENCE [LARGE SCALE GENOMIC DNA]</scope>
    <source>
        <strain>DSM 17950 / CFBP 7177 / CIP 109463 / NCPPB 4357 / Et1/99</strain>
    </source>
</reference>
<organism>
    <name type="scientific">Erwinia tasmaniensis (strain DSM 17950 / CFBP 7177 / CIP 109463 / NCPPB 4357 / Et1/99)</name>
    <dbReference type="NCBI Taxonomy" id="465817"/>
    <lineage>
        <taxon>Bacteria</taxon>
        <taxon>Pseudomonadati</taxon>
        <taxon>Pseudomonadota</taxon>
        <taxon>Gammaproteobacteria</taxon>
        <taxon>Enterobacterales</taxon>
        <taxon>Erwiniaceae</taxon>
        <taxon>Erwinia</taxon>
    </lineage>
</organism>
<gene>
    <name evidence="1" type="primary">rplD</name>
    <name type="ordered locus">ETA_31620</name>
</gene>
<accession>B2VK63</accession>
<dbReference type="EMBL" id="CU468135">
    <property type="protein sequence ID" value="CAO98208.1"/>
    <property type="molecule type" value="Genomic_DNA"/>
</dbReference>
<dbReference type="RefSeq" id="WP_012442843.1">
    <property type="nucleotide sequence ID" value="NC_010694.1"/>
</dbReference>
<dbReference type="SMR" id="B2VK63"/>
<dbReference type="STRING" id="465817.ETA_31620"/>
<dbReference type="KEGG" id="eta:ETA_31620"/>
<dbReference type="eggNOG" id="COG0088">
    <property type="taxonomic scope" value="Bacteria"/>
</dbReference>
<dbReference type="HOGENOM" id="CLU_041575_5_2_6"/>
<dbReference type="OrthoDB" id="9803201at2"/>
<dbReference type="Proteomes" id="UP000001726">
    <property type="component" value="Chromosome"/>
</dbReference>
<dbReference type="GO" id="GO:1990904">
    <property type="term" value="C:ribonucleoprotein complex"/>
    <property type="evidence" value="ECO:0007669"/>
    <property type="project" value="UniProtKB-KW"/>
</dbReference>
<dbReference type="GO" id="GO:0005840">
    <property type="term" value="C:ribosome"/>
    <property type="evidence" value="ECO:0007669"/>
    <property type="project" value="UniProtKB-KW"/>
</dbReference>
<dbReference type="GO" id="GO:0019843">
    <property type="term" value="F:rRNA binding"/>
    <property type="evidence" value="ECO:0007669"/>
    <property type="project" value="UniProtKB-UniRule"/>
</dbReference>
<dbReference type="GO" id="GO:0003735">
    <property type="term" value="F:structural constituent of ribosome"/>
    <property type="evidence" value="ECO:0007669"/>
    <property type="project" value="InterPro"/>
</dbReference>
<dbReference type="GO" id="GO:0006412">
    <property type="term" value="P:translation"/>
    <property type="evidence" value="ECO:0007669"/>
    <property type="project" value="UniProtKB-UniRule"/>
</dbReference>
<dbReference type="FunFam" id="3.40.1370.10:FF:000001">
    <property type="entry name" value="50S ribosomal protein L4"/>
    <property type="match status" value="1"/>
</dbReference>
<dbReference type="Gene3D" id="3.40.1370.10">
    <property type="match status" value="1"/>
</dbReference>
<dbReference type="HAMAP" id="MF_01328_B">
    <property type="entry name" value="Ribosomal_uL4_B"/>
    <property type="match status" value="1"/>
</dbReference>
<dbReference type="InterPro" id="IPR002136">
    <property type="entry name" value="Ribosomal_uL4"/>
</dbReference>
<dbReference type="InterPro" id="IPR013005">
    <property type="entry name" value="Ribosomal_uL4-like"/>
</dbReference>
<dbReference type="InterPro" id="IPR023574">
    <property type="entry name" value="Ribosomal_uL4_dom_sf"/>
</dbReference>
<dbReference type="NCBIfam" id="TIGR03953">
    <property type="entry name" value="rplD_bact"/>
    <property type="match status" value="1"/>
</dbReference>
<dbReference type="PANTHER" id="PTHR10746">
    <property type="entry name" value="50S RIBOSOMAL PROTEIN L4"/>
    <property type="match status" value="1"/>
</dbReference>
<dbReference type="PANTHER" id="PTHR10746:SF6">
    <property type="entry name" value="LARGE RIBOSOMAL SUBUNIT PROTEIN UL4M"/>
    <property type="match status" value="1"/>
</dbReference>
<dbReference type="Pfam" id="PF00573">
    <property type="entry name" value="Ribosomal_L4"/>
    <property type="match status" value="1"/>
</dbReference>
<dbReference type="SUPFAM" id="SSF52166">
    <property type="entry name" value="Ribosomal protein L4"/>
    <property type="match status" value="1"/>
</dbReference>
<keyword id="KW-1185">Reference proteome</keyword>
<keyword id="KW-0687">Ribonucleoprotein</keyword>
<keyword id="KW-0689">Ribosomal protein</keyword>
<keyword id="KW-0694">RNA-binding</keyword>
<keyword id="KW-0699">rRNA-binding</keyword>
<protein>
    <recommendedName>
        <fullName evidence="1">Large ribosomal subunit protein uL4</fullName>
    </recommendedName>
    <alternativeName>
        <fullName evidence="3">50S ribosomal protein L4</fullName>
    </alternativeName>
</protein>
<name>RL4_ERWT9</name>
<proteinExistence type="inferred from homology"/>